<organism>
    <name type="scientific">Oryza sativa subsp. japonica</name>
    <name type="common">Rice</name>
    <dbReference type="NCBI Taxonomy" id="39947"/>
    <lineage>
        <taxon>Eukaryota</taxon>
        <taxon>Viridiplantae</taxon>
        <taxon>Streptophyta</taxon>
        <taxon>Embryophyta</taxon>
        <taxon>Tracheophyta</taxon>
        <taxon>Spermatophyta</taxon>
        <taxon>Magnoliopsida</taxon>
        <taxon>Liliopsida</taxon>
        <taxon>Poales</taxon>
        <taxon>Poaceae</taxon>
        <taxon>BOP clade</taxon>
        <taxon>Oryzoideae</taxon>
        <taxon>Oryzeae</taxon>
        <taxon>Oryzinae</taxon>
        <taxon>Oryza</taxon>
        <taxon>Oryza sativa</taxon>
    </lineage>
</organism>
<feature type="signal peptide" evidence="2">
    <location>
        <begin position="1"/>
        <end position="23"/>
    </location>
</feature>
<feature type="chain" id="PRO_0000249297" description="Endoglucanase 20">
    <location>
        <begin position="24"/>
        <end position="516"/>
    </location>
</feature>
<feature type="active site" description="Nucleophile" evidence="4">
    <location>
        <position position="93"/>
    </location>
</feature>
<feature type="active site" evidence="3">
    <location>
        <position position="416"/>
    </location>
</feature>
<feature type="active site" evidence="1">
    <location>
        <position position="468"/>
    </location>
</feature>
<feature type="active site" evidence="1">
    <location>
        <position position="477"/>
    </location>
</feature>
<feature type="glycosylation site" description="N-linked (GlcNAc...) asparagine" evidence="2">
    <location>
        <position position="83"/>
    </location>
</feature>
<reference key="1">
    <citation type="journal article" date="2005" name="Nature">
        <title>The map-based sequence of the rice genome.</title>
        <authorList>
            <consortium name="International rice genome sequencing project (IRGSP)"/>
        </authorList>
    </citation>
    <scope>NUCLEOTIDE SEQUENCE [LARGE SCALE GENOMIC DNA]</scope>
    <source>
        <strain>cv. Nipponbare</strain>
    </source>
</reference>
<reference key="2">
    <citation type="journal article" date="2008" name="Nucleic Acids Res.">
        <title>The rice annotation project database (RAP-DB): 2008 update.</title>
        <authorList>
            <consortium name="The rice annotation project (RAP)"/>
        </authorList>
    </citation>
    <scope>GENOME REANNOTATION</scope>
    <source>
        <strain>cv. Nipponbare</strain>
    </source>
</reference>
<reference key="3">
    <citation type="journal article" date="2013" name="Rice">
        <title>Improvement of the Oryza sativa Nipponbare reference genome using next generation sequence and optical map data.</title>
        <authorList>
            <person name="Kawahara Y."/>
            <person name="de la Bastide M."/>
            <person name="Hamilton J.P."/>
            <person name="Kanamori H."/>
            <person name="McCombie W.R."/>
            <person name="Ouyang S."/>
            <person name="Schwartz D.C."/>
            <person name="Tanaka T."/>
            <person name="Wu J."/>
            <person name="Zhou S."/>
            <person name="Childs K.L."/>
            <person name="Davidson R.M."/>
            <person name="Lin H."/>
            <person name="Quesada-Ocampo L."/>
            <person name="Vaillancourt B."/>
            <person name="Sakai H."/>
            <person name="Lee S.S."/>
            <person name="Kim J."/>
            <person name="Numa H."/>
            <person name="Itoh T."/>
            <person name="Buell C.R."/>
            <person name="Matsumoto T."/>
        </authorList>
    </citation>
    <scope>GENOME REANNOTATION</scope>
    <source>
        <strain>cv. Nipponbare</strain>
    </source>
</reference>
<reference key="4">
    <citation type="journal article" date="2003" name="Science">
        <title>Collection, mapping, and annotation of over 28,000 cDNA clones from japonica rice.</title>
        <authorList>
            <consortium name="The rice full-length cDNA consortium"/>
        </authorList>
    </citation>
    <scope>NUCLEOTIDE SEQUENCE [LARGE SCALE MRNA]</scope>
    <source>
        <strain>cv. Nipponbare</strain>
    </source>
</reference>
<accession>Q6ZA06</accession>
<accession>A0A0P0XFV4</accession>
<accession>Q0J5Y8</accession>
<protein>
    <recommendedName>
        <fullName>Endoglucanase 20</fullName>
        <ecNumber>3.2.1.4</ecNumber>
    </recommendedName>
    <alternativeName>
        <fullName>Endo-1,4-beta glucanase 20</fullName>
    </alternativeName>
    <alternativeName>
        <fullName>OsGLU15</fullName>
    </alternativeName>
</protein>
<name>GUN20_ORYSJ</name>
<evidence type="ECO:0000250" key="1"/>
<evidence type="ECO:0000255" key="2"/>
<evidence type="ECO:0000255" key="3">
    <source>
        <dbReference type="PROSITE-ProRule" id="PRU10059"/>
    </source>
</evidence>
<evidence type="ECO:0000255" key="4">
    <source>
        <dbReference type="PROSITE-ProRule" id="PRU10140"/>
    </source>
</evidence>
<evidence type="ECO:0000305" key="5"/>
<dbReference type="EC" id="3.2.1.4"/>
<dbReference type="EMBL" id="AP004689">
    <property type="protein sequence ID" value="BAD05437.1"/>
    <property type="molecule type" value="Genomic_DNA"/>
</dbReference>
<dbReference type="EMBL" id="AP008214">
    <property type="protein sequence ID" value="BAF23627.1"/>
    <property type="molecule type" value="Genomic_DNA"/>
</dbReference>
<dbReference type="EMBL" id="AP014964">
    <property type="protein sequence ID" value="BAT05264.1"/>
    <property type="molecule type" value="Genomic_DNA"/>
</dbReference>
<dbReference type="EMBL" id="AK071784">
    <property type="protein sequence ID" value="BAG92694.1"/>
    <property type="molecule type" value="mRNA"/>
</dbReference>
<dbReference type="RefSeq" id="XP_015650922.1">
    <property type="nucleotide sequence ID" value="XM_015795436.1"/>
</dbReference>
<dbReference type="SMR" id="Q6ZA06"/>
<dbReference type="FunCoup" id="Q6ZA06">
    <property type="interactions" value="18"/>
</dbReference>
<dbReference type="STRING" id="39947.Q6ZA06"/>
<dbReference type="CAZy" id="GH9">
    <property type="family name" value="Glycoside Hydrolase Family 9"/>
</dbReference>
<dbReference type="GlyCosmos" id="Q6ZA06">
    <property type="glycosylation" value="1 site, No reported glycans"/>
</dbReference>
<dbReference type="PaxDb" id="39947-Q6ZA06"/>
<dbReference type="EnsemblPlants" id="Os08t0387400-01">
    <property type="protein sequence ID" value="Os08t0387400-01"/>
    <property type="gene ID" value="Os08g0387400"/>
</dbReference>
<dbReference type="Gramene" id="Os08t0387400-01">
    <property type="protein sequence ID" value="Os08t0387400-01"/>
    <property type="gene ID" value="Os08g0387400"/>
</dbReference>
<dbReference type="KEGG" id="dosa:Os08g0387400"/>
<dbReference type="eggNOG" id="ENOG502QRF6">
    <property type="taxonomic scope" value="Eukaryota"/>
</dbReference>
<dbReference type="HOGENOM" id="CLU_008926_1_4_1"/>
<dbReference type="InParanoid" id="Q6ZA06"/>
<dbReference type="OMA" id="NNQGWSQ"/>
<dbReference type="OrthoDB" id="10257085at2759"/>
<dbReference type="Proteomes" id="UP000000763">
    <property type="component" value="Chromosome 8"/>
</dbReference>
<dbReference type="Proteomes" id="UP000059680">
    <property type="component" value="Chromosome 8"/>
</dbReference>
<dbReference type="GO" id="GO:0005576">
    <property type="term" value="C:extracellular region"/>
    <property type="evidence" value="ECO:0007669"/>
    <property type="project" value="UniProtKB-SubCell"/>
</dbReference>
<dbReference type="GO" id="GO:0008810">
    <property type="term" value="F:cellulase activity"/>
    <property type="evidence" value="ECO:0007669"/>
    <property type="project" value="UniProtKB-EC"/>
</dbReference>
<dbReference type="GO" id="GO:0071555">
    <property type="term" value="P:cell wall organization"/>
    <property type="evidence" value="ECO:0007669"/>
    <property type="project" value="UniProtKB-KW"/>
</dbReference>
<dbReference type="GO" id="GO:0030245">
    <property type="term" value="P:cellulose catabolic process"/>
    <property type="evidence" value="ECO:0007669"/>
    <property type="project" value="UniProtKB-KW"/>
</dbReference>
<dbReference type="FunFam" id="1.50.10.10:FF:000020">
    <property type="entry name" value="Endoglucanase"/>
    <property type="match status" value="1"/>
</dbReference>
<dbReference type="Gene3D" id="1.50.10.10">
    <property type="match status" value="1"/>
</dbReference>
<dbReference type="InterPro" id="IPR008928">
    <property type="entry name" value="6-hairpin_glycosidase_sf"/>
</dbReference>
<dbReference type="InterPro" id="IPR012341">
    <property type="entry name" value="6hp_glycosidase-like_sf"/>
</dbReference>
<dbReference type="InterPro" id="IPR001701">
    <property type="entry name" value="Glyco_hydro_9"/>
</dbReference>
<dbReference type="InterPro" id="IPR018221">
    <property type="entry name" value="Glyco_hydro_9_His_AS"/>
</dbReference>
<dbReference type="PANTHER" id="PTHR22298">
    <property type="entry name" value="ENDO-1,4-BETA-GLUCANASE"/>
    <property type="match status" value="1"/>
</dbReference>
<dbReference type="Pfam" id="PF00759">
    <property type="entry name" value="Glyco_hydro_9"/>
    <property type="match status" value="1"/>
</dbReference>
<dbReference type="SUPFAM" id="SSF48208">
    <property type="entry name" value="Six-hairpin glycosidases"/>
    <property type="match status" value="1"/>
</dbReference>
<dbReference type="PROSITE" id="PS60032">
    <property type="entry name" value="GH9_1"/>
    <property type="match status" value="1"/>
</dbReference>
<dbReference type="PROSITE" id="PS00592">
    <property type="entry name" value="GH9_2"/>
    <property type="match status" value="1"/>
</dbReference>
<gene>
    <name type="primary">GLU15</name>
    <name type="ordered locus">Os08g0387400</name>
    <name type="ordered locus">LOC_Os08g29770</name>
    <name type="ORF">P0434E03.25</name>
</gene>
<proteinExistence type="evidence at transcript level"/>
<keyword id="KW-0119">Carbohydrate metabolism</keyword>
<keyword id="KW-0961">Cell wall biogenesis/degradation</keyword>
<keyword id="KW-0136">Cellulose degradation</keyword>
<keyword id="KW-0325">Glycoprotein</keyword>
<keyword id="KW-0326">Glycosidase</keyword>
<keyword id="KW-0378">Hydrolase</keyword>
<keyword id="KW-0624">Polysaccharide degradation</keyword>
<keyword id="KW-1185">Reference proteome</keyword>
<keyword id="KW-0964">Secreted</keyword>
<keyword id="KW-0732">Signal</keyword>
<comment type="catalytic activity">
    <reaction>
        <text>Endohydrolysis of (1-&gt;4)-beta-D-glucosidic linkages in cellulose, lichenin and cereal beta-D-glucans.</text>
        <dbReference type="EC" id="3.2.1.4"/>
    </reaction>
</comment>
<comment type="subcellular location">
    <subcellularLocation>
        <location evidence="1">Secreted</location>
    </subcellularLocation>
</comment>
<comment type="similarity">
    <text evidence="4 5">Belongs to the glycosyl hydrolase 9 (cellulase E) family.</text>
</comment>
<sequence length="516" mass="55111">MAAGMVATMVLLTCLAAGGLVVGAEEDGGGGGLGRLGSPDYGDALAKAILFFEGQRSGRLPANQRATWRGDSALTDGREENVNLTGGYYDAGDNVKFGYPMAFTVTLLGWSAVEYGAAVAAAGELGNLRAAIRWGADFLLRAHASPTTLYTQVGDGNADHQCWERPEDMDTPRTLYKITADSPGSEAAAEASAALAAAYVALKDDGDTAFSSRLLAASRSLFDFANNYRGSFQSSCPFYCSYSGFQDELLWASAWLFKATRDAKYLDFLTNNQGSSNPVNEFSWDNKYAGAQMLAAQEYLGGRTQLARYKDNLDSFVCALMPNSGNVQIRTTPGGLLFTRDSVNLQYTTTATLVLSIYSKVLKSSGSRGVRCSAATFSPNQISSFATSQVDYILGKNPLGMSYMVGFSTKFPRRIHHRGSSIPSIKVLSRKVTCKEGFSSWLPTSDPNPNIHVGAIVGGPDGNDQFSDNRGDSSHSEPATYINAAFVGACAAAMGQKQVVKLEEPADNLESMVSTY</sequence>